<accession>C4K4M9</accession>
<feature type="chain" id="PRO_1000206553" description="Large ribosomal subunit protein bL9">
    <location>
        <begin position="1"/>
        <end position="150"/>
    </location>
</feature>
<gene>
    <name evidence="1" type="primary">rplI</name>
    <name type="ordered locus">HDEF_0795</name>
</gene>
<reference key="1">
    <citation type="journal article" date="2009" name="Proc. Natl. Acad. Sci. U.S.A.">
        <title>Hamiltonella defensa, genome evolution of protective bacterial endosymbiont from pathogenic ancestors.</title>
        <authorList>
            <person name="Degnan P.H."/>
            <person name="Yu Y."/>
            <person name="Sisneros N."/>
            <person name="Wing R.A."/>
            <person name="Moran N.A."/>
        </authorList>
    </citation>
    <scope>NUCLEOTIDE SEQUENCE [LARGE SCALE GENOMIC DNA]</scope>
    <source>
        <strain>5AT</strain>
    </source>
</reference>
<comment type="function">
    <text evidence="1">Binds to the 23S rRNA.</text>
</comment>
<comment type="similarity">
    <text evidence="1">Belongs to the bacterial ribosomal protein bL9 family.</text>
</comment>
<name>RL9_HAMD5</name>
<sequence length="150" mass="16563">MEVILLDEIENFGQLGDKVKVKRGFARNFLLPKGKAVLATKKNMAYFDERRSELESKAAKAIEEAKARARAINELASLTIASKAGSEGRLFGSIGTRDIAKSLSDAGIPVMKNEVRLLNGFLRTLGEHEVHFKIYNGVFAQLKVIIISED</sequence>
<dbReference type="EMBL" id="CP001277">
    <property type="protein sequence ID" value="ACQ67522.1"/>
    <property type="molecule type" value="Genomic_DNA"/>
</dbReference>
<dbReference type="RefSeq" id="WP_015873342.1">
    <property type="nucleotide sequence ID" value="NC_012751.1"/>
</dbReference>
<dbReference type="SMR" id="C4K4M9"/>
<dbReference type="STRING" id="572265.HDEF_0795"/>
<dbReference type="GeneID" id="66260635"/>
<dbReference type="KEGG" id="hde:HDEF_0795"/>
<dbReference type="eggNOG" id="COG0359">
    <property type="taxonomic scope" value="Bacteria"/>
</dbReference>
<dbReference type="HOGENOM" id="CLU_078938_4_1_6"/>
<dbReference type="Proteomes" id="UP000002334">
    <property type="component" value="Chromosome"/>
</dbReference>
<dbReference type="GO" id="GO:1990904">
    <property type="term" value="C:ribonucleoprotein complex"/>
    <property type="evidence" value="ECO:0007669"/>
    <property type="project" value="UniProtKB-KW"/>
</dbReference>
<dbReference type="GO" id="GO:0005840">
    <property type="term" value="C:ribosome"/>
    <property type="evidence" value="ECO:0007669"/>
    <property type="project" value="UniProtKB-KW"/>
</dbReference>
<dbReference type="GO" id="GO:0019843">
    <property type="term" value="F:rRNA binding"/>
    <property type="evidence" value="ECO:0007669"/>
    <property type="project" value="UniProtKB-UniRule"/>
</dbReference>
<dbReference type="GO" id="GO:0003735">
    <property type="term" value="F:structural constituent of ribosome"/>
    <property type="evidence" value="ECO:0007669"/>
    <property type="project" value="InterPro"/>
</dbReference>
<dbReference type="GO" id="GO:0006412">
    <property type="term" value="P:translation"/>
    <property type="evidence" value="ECO:0007669"/>
    <property type="project" value="UniProtKB-UniRule"/>
</dbReference>
<dbReference type="Gene3D" id="3.10.430.100">
    <property type="entry name" value="Ribosomal protein L9, C-terminal domain"/>
    <property type="match status" value="1"/>
</dbReference>
<dbReference type="Gene3D" id="3.40.5.10">
    <property type="entry name" value="Ribosomal protein L9, N-terminal domain"/>
    <property type="match status" value="1"/>
</dbReference>
<dbReference type="HAMAP" id="MF_00503">
    <property type="entry name" value="Ribosomal_bL9"/>
    <property type="match status" value="1"/>
</dbReference>
<dbReference type="InterPro" id="IPR000244">
    <property type="entry name" value="Ribosomal_bL9"/>
</dbReference>
<dbReference type="InterPro" id="IPR009027">
    <property type="entry name" value="Ribosomal_bL9/RNase_H1_N"/>
</dbReference>
<dbReference type="InterPro" id="IPR020594">
    <property type="entry name" value="Ribosomal_bL9_bac/chp"/>
</dbReference>
<dbReference type="InterPro" id="IPR020069">
    <property type="entry name" value="Ribosomal_bL9_C"/>
</dbReference>
<dbReference type="InterPro" id="IPR036791">
    <property type="entry name" value="Ribosomal_bL9_C_sf"/>
</dbReference>
<dbReference type="InterPro" id="IPR020070">
    <property type="entry name" value="Ribosomal_bL9_N"/>
</dbReference>
<dbReference type="InterPro" id="IPR036935">
    <property type="entry name" value="Ribosomal_bL9_N_sf"/>
</dbReference>
<dbReference type="NCBIfam" id="TIGR00158">
    <property type="entry name" value="L9"/>
    <property type="match status" value="1"/>
</dbReference>
<dbReference type="PANTHER" id="PTHR21368">
    <property type="entry name" value="50S RIBOSOMAL PROTEIN L9"/>
    <property type="match status" value="1"/>
</dbReference>
<dbReference type="Pfam" id="PF03948">
    <property type="entry name" value="Ribosomal_L9_C"/>
    <property type="match status" value="1"/>
</dbReference>
<dbReference type="Pfam" id="PF01281">
    <property type="entry name" value="Ribosomal_L9_N"/>
    <property type="match status" value="1"/>
</dbReference>
<dbReference type="SUPFAM" id="SSF55658">
    <property type="entry name" value="L9 N-domain-like"/>
    <property type="match status" value="1"/>
</dbReference>
<dbReference type="SUPFAM" id="SSF55653">
    <property type="entry name" value="Ribosomal protein L9 C-domain"/>
    <property type="match status" value="1"/>
</dbReference>
<dbReference type="PROSITE" id="PS00651">
    <property type="entry name" value="RIBOSOMAL_L9"/>
    <property type="match status" value="1"/>
</dbReference>
<evidence type="ECO:0000255" key="1">
    <source>
        <dbReference type="HAMAP-Rule" id="MF_00503"/>
    </source>
</evidence>
<evidence type="ECO:0000305" key="2"/>
<proteinExistence type="inferred from homology"/>
<keyword id="KW-0687">Ribonucleoprotein</keyword>
<keyword id="KW-0689">Ribosomal protein</keyword>
<keyword id="KW-0694">RNA-binding</keyword>
<keyword id="KW-0699">rRNA-binding</keyword>
<organism>
    <name type="scientific">Hamiltonella defensa subsp. Acyrthosiphon pisum (strain 5AT)</name>
    <dbReference type="NCBI Taxonomy" id="572265"/>
    <lineage>
        <taxon>Bacteria</taxon>
        <taxon>Pseudomonadati</taxon>
        <taxon>Pseudomonadota</taxon>
        <taxon>Gammaproteobacteria</taxon>
        <taxon>Enterobacterales</taxon>
        <taxon>Enterobacteriaceae</taxon>
        <taxon>aphid secondary symbionts</taxon>
        <taxon>Candidatus Hamiltonella</taxon>
    </lineage>
</organism>
<protein>
    <recommendedName>
        <fullName evidence="1">Large ribosomal subunit protein bL9</fullName>
    </recommendedName>
    <alternativeName>
        <fullName evidence="2">50S ribosomal protein L9</fullName>
    </alternativeName>
</protein>